<accession>A1JPE3</accession>
<sequence>MSVYSLPPAPPTDEHQLFQRAEALSGFTLGELASKAGWNIPADLKRIKGWVGMLLEFYLGASAGSKPEQDFADIGIELKTIPISAQGKPLETTFVCVAPLTGNSGITWESSHVRHKLARVLWVPVEGERQIPLAQRRVGAPLLWSPNEEEEELLRRDWEELMDLIVLGKVETITARHGEVLQLRPKAANSRALTEAIGEHGQPIMTLPRGFYLKKTFTGPMLARHFLL</sequence>
<reference key="1">
    <citation type="journal article" date="2006" name="PLoS Genet.">
        <title>The complete genome sequence and comparative genome analysis of the high pathogenicity Yersinia enterocolitica strain 8081.</title>
        <authorList>
            <person name="Thomson N.R."/>
            <person name="Howard S."/>
            <person name="Wren B.W."/>
            <person name="Holden M.T.G."/>
            <person name="Crossman L."/>
            <person name="Challis G.L."/>
            <person name="Churcher C."/>
            <person name="Mungall K."/>
            <person name="Brooks K."/>
            <person name="Chillingworth T."/>
            <person name="Feltwell T."/>
            <person name="Abdellah Z."/>
            <person name="Hauser H."/>
            <person name="Jagels K."/>
            <person name="Maddison M."/>
            <person name="Moule S."/>
            <person name="Sanders M."/>
            <person name="Whitehead S."/>
            <person name="Quail M.A."/>
            <person name="Dougan G."/>
            <person name="Parkhill J."/>
            <person name="Prentice M.B."/>
        </authorList>
    </citation>
    <scope>NUCLEOTIDE SEQUENCE [LARGE SCALE GENOMIC DNA]</scope>
    <source>
        <strain>NCTC 13174 / 8081</strain>
    </source>
</reference>
<protein>
    <recommendedName>
        <fullName evidence="1">DNA mismatch repair protein MutH</fullName>
    </recommendedName>
    <alternativeName>
        <fullName evidence="1">Methyl-directed mismatch repair protein</fullName>
    </alternativeName>
</protein>
<proteinExistence type="inferred from homology"/>
<organism>
    <name type="scientific">Yersinia enterocolitica serotype O:8 / biotype 1B (strain NCTC 13174 / 8081)</name>
    <dbReference type="NCBI Taxonomy" id="393305"/>
    <lineage>
        <taxon>Bacteria</taxon>
        <taxon>Pseudomonadati</taxon>
        <taxon>Pseudomonadota</taxon>
        <taxon>Gammaproteobacteria</taxon>
        <taxon>Enterobacterales</taxon>
        <taxon>Yersiniaceae</taxon>
        <taxon>Yersinia</taxon>
    </lineage>
</organism>
<gene>
    <name evidence="1" type="primary">mutH</name>
    <name type="ordered locus">YE3322</name>
</gene>
<keyword id="KW-0963">Cytoplasm</keyword>
<keyword id="KW-0227">DNA damage</keyword>
<keyword id="KW-0234">DNA repair</keyword>
<keyword id="KW-0255">Endonuclease</keyword>
<keyword id="KW-0378">Hydrolase</keyword>
<keyword id="KW-0540">Nuclease</keyword>
<feature type="chain" id="PRO_1000046718" description="DNA mismatch repair protein MutH">
    <location>
        <begin position="1"/>
        <end position="228"/>
    </location>
</feature>
<dbReference type="EMBL" id="AM286415">
    <property type="protein sequence ID" value="CAL13351.1"/>
    <property type="molecule type" value="Genomic_DNA"/>
</dbReference>
<dbReference type="RefSeq" id="WP_005165371.1">
    <property type="nucleotide sequence ID" value="NC_008800.1"/>
</dbReference>
<dbReference type="RefSeq" id="YP_001007495.1">
    <property type="nucleotide sequence ID" value="NC_008800.1"/>
</dbReference>
<dbReference type="SMR" id="A1JPE3"/>
<dbReference type="GeneID" id="31411973"/>
<dbReference type="KEGG" id="yen:YE3322"/>
<dbReference type="PATRIC" id="fig|393305.7.peg.3530"/>
<dbReference type="eggNOG" id="COG3066">
    <property type="taxonomic scope" value="Bacteria"/>
</dbReference>
<dbReference type="HOGENOM" id="CLU_086669_0_0_6"/>
<dbReference type="OrthoDB" id="5634909at2"/>
<dbReference type="Proteomes" id="UP000000642">
    <property type="component" value="Chromosome"/>
</dbReference>
<dbReference type="GO" id="GO:0005737">
    <property type="term" value="C:cytoplasm"/>
    <property type="evidence" value="ECO:0007669"/>
    <property type="project" value="UniProtKB-SubCell"/>
</dbReference>
<dbReference type="GO" id="GO:0003677">
    <property type="term" value="F:DNA binding"/>
    <property type="evidence" value="ECO:0007669"/>
    <property type="project" value="InterPro"/>
</dbReference>
<dbReference type="GO" id="GO:0004519">
    <property type="term" value="F:endonuclease activity"/>
    <property type="evidence" value="ECO:0007669"/>
    <property type="project" value="UniProtKB-UniRule"/>
</dbReference>
<dbReference type="GO" id="GO:0006304">
    <property type="term" value="P:DNA modification"/>
    <property type="evidence" value="ECO:0007669"/>
    <property type="project" value="InterPro"/>
</dbReference>
<dbReference type="GO" id="GO:0006298">
    <property type="term" value="P:mismatch repair"/>
    <property type="evidence" value="ECO:0007669"/>
    <property type="project" value="UniProtKB-UniRule"/>
</dbReference>
<dbReference type="CDD" id="cd00583">
    <property type="entry name" value="MutH-like"/>
    <property type="match status" value="1"/>
</dbReference>
<dbReference type="FunFam" id="3.40.600.10:FF:000001">
    <property type="entry name" value="DNA mismatch repair protein MutH"/>
    <property type="match status" value="1"/>
</dbReference>
<dbReference type="Gene3D" id="3.40.600.10">
    <property type="entry name" value="DNA mismatch repair MutH/Restriction endonuclease, type II"/>
    <property type="match status" value="1"/>
</dbReference>
<dbReference type="HAMAP" id="MF_00759">
    <property type="entry name" value="MutH"/>
    <property type="match status" value="1"/>
</dbReference>
<dbReference type="InterPro" id="IPR004230">
    <property type="entry name" value="DNA_mismatch_repair_MutH"/>
</dbReference>
<dbReference type="InterPro" id="IPR011337">
    <property type="entry name" value="DNA_rep_MutH/RE_typeII_Sau3AI"/>
</dbReference>
<dbReference type="InterPro" id="IPR037057">
    <property type="entry name" value="DNA_rep_MutH/T2_RE_sf"/>
</dbReference>
<dbReference type="InterPro" id="IPR011335">
    <property type="entry name" value="Restrct_endonuc-II-like"/>
</dbReference>
<dbReference type="NCBIfam" id="TIGR02248">
    <property type="entry name" value="mutH_TIGR"/>
    <property type="match status" value="1"/>
</dbReference>
<dbReference type="NCBIfam" id="NF003458">
    <property type="entry name" value="PRK05070.1"/>
    <property type="match status" value="1"/>
</dbReference>
<dbReference type="Pfam" id="PF02976">
    <property type="entry name" value="MutH"/>
    <property type="match status" value="1"/>
</dbReference>
<dbReference type="SMART" id="SM00927">
    <property type="entry name" value="MutH"/>
    <property type="match status" value="1"/>
</dbReference>
<dbReference type="SUPFAM" id="SSF52980">
    <property type="entry name" value="Restriction endonuclease-like"/>
    <property type="match status" value="1"/>
</dbReference>
<comment type="function">
    <text evidence="1">Sequence-specific endonuclease that cleaves unmethylated GATC sequences. It is involved in DNA mismatch repair.</text>
</comment>
<comment type="subcellular location">
    <subcellularLocation>
        <location evidence="1">Cytoplasm</location>
    </subcellularLocation>
</comment>
<comment type="similarity">
    <text evidence="1">Belongs to the MutH family.</text>
</comment>
<evidence type="ECO:0000255" key="1">
    <source>
        <dbReference type="HAMAP-Rule" id="MF_00759"/>
    </source>
</evidence>
<name>MUTH_YERE8</name>